<protein>
    <recommendedName>
        <fullName evidence="1">dTTP/UTP pyrophosphatase</fullName>
        <shortName evidence="1">dTTPase/UTPase</shortName>
        <ecNumber evidence="1">3.6.1.9</ecNumber>
    </recommendedName>
    <alternativeName>
        <fullName evidence="1">Nucleoside triphosphate pyrophosphatase</fullName>
    </alternativeName>
    <alternativeName>
        <fullName evidence="1">Nucleotide pyrophosphatase</fullName>
        <shortName evidence="1">Nucleotide PPase</shortName>
    </alternativeName>
</protein>
<accession>B9IZ30</accession>
<reference key="1">
    <citation type="journal article" date="2009" name="J. Bacteriol.">
        <title>Complete genome sequence of the extremophilic Bacillus cereus strain Q1 with industrial applications.</title>
        <authorList>
            <person name="Xiong Z."/>
            <person name="Jiang Y."/>
            <person name="Qi D."/>
            <person name="Lu H."/>
            <person name="Yang F."/>
            <person name="Yang J."/>
            <person name="Chen L."/>
            <person name="Sun L."/>
            <person name="Xu X."/>
            <person name="Xue Y."/>
            <person name="Zhu Y."/>
            <person name="Jin Q."/>
        </authorList>
    </citation>
    <scope>NUCLEOTIDE SEQUENCE [LARGE SCALE GENOMIC DNA]</scope>
    <source>
        <strain>Q1</strain>
    </source>
</reference>
<sequence>MRKIILASGSPRRKELLELASVPFEIIVSEVEETIGAYSSPSDIVMSLALQKASAVAEYNSDHIVLGADTIVTYESRILGKPSNEAEAKEMLQLLSGKTHEVYTGVAIIAKDKTVTFYERTEVTFWELTEEEIDAYIALKEPLDKAGSYGIQGKGSIFVQHIQGDYYSVVGLPISRLVRELKQFNIDVTHA</sequence>
<organism>
    <name type="scientific">Bacillus cereus (strain Q1)</name>
    <dbReference type="NCBI Taxonomy" id="361100"/>
    <lineage>
        <taxon>Bacteria</taxon>
        <taxon>Bacillati</taxon>
        <taxon>Bacillota</taxon>
        <taxon>Bacilli</taxon>
        <taxon>Bacillales</taxon>
        <taxon>Bacillaceae</taxon>
        <taxon>Bacillus</taxon>
        <taxon>Bacillus cereus group</taxon>
    </lineage>
</organism>
<name>NTPPA_BACCQ</name>
<keyword id="KW-0963">Cytoplasm</keyword>
<keyword id="KW-0378">Hydrolase</keyword>
<keyword id="KW-0546">Nucleotide metabolism</keyword>
<feature type="chain" id="PRO_1000146282" description="dTTP/UTP pyrophosphatase">
    <location>
        <begin position="1"/>
        <end position="191"/>
    </location>
</feature>
<feature type="active site" description="Proton acceptor" evidence="1">
    <location>
        <position position="69"/>
    </location>
</feature>
<feature type="site" description="Important for substrate specificity" evidence="1">
    <location>
        <position position="12"/>
    </location>
</feature>
<feature type="site" description="Important for substrate specificity" evidence="1">
    <location>
        <position position="70"/>
    </location>
</feature>
<feature type="site" description="Important for substrate specificity" evidence="1">
    <location>
        <position position="152"/>
    </location>
</feature>
<proteinExistence type="inferred from homology"/>
<gene>
    <name type="primary">maf</name>
    <name type="ordered locus">BCQ_4242</name>
</gene>
<comment type="function">
    <text evidence="1">Nucleoside triphosphate pyrophosphatase that hydrolyzes dTTP and UTP. May have a dual role in cell division arrest and in preventing the incorporation of modified nucleotides into cellular nucleic acids.</text>
</comment>
<comment type="catalytic activity">
    <reaction evidence="1">
        <text>dTTP + H2O = dTMP + diphosphate + H(+)</text>
        <dbReference type="Rhea" id="RHEA:28534"/>
        <dbReference type="ChEBI" id="CHEBI:15377"/>
        <dbReference type="ChEBI" id="CHEBI:15378"/>
        <dbReference type="ChEBI" id="CHEBI:33019"/>
        <dbReference type="ChEBI" id="CHEBI:37568"/>
        <dbReference type="ChEBI" id="CHEBI:63528"/>
        <dbReference type="EC" id="3.6.1.9"/>
    </reaction>
</comment>
<comment type="catalytic activity">
    <reaction evidence="1">
        <text>UTP + H2O = UMP + diphosphate + H(+)</text>
        <dbReference type="Rhea" id="RHEA:29395"/>
        <dbReference type="ChEBI" id="CHEBI:15377"/>
        <dbReference type="ChEBI" id="CHEBI:15378"/>
        <dbReference type="ChEBI" id="CHEBI:33019"/>
        <dbReference type="ChEBI" id="CHEBI:46398"/>
        <dbReference type="ChEBI" id="CHEBI:57865"/>
        <dbReference type="EC" id="3.6.1.9"/>
    </reaction>
</comment>
<comment type="cofactor">
    <cofactor evidence="1">
        <name>a divalent metal cation</name>
        <dbReference type="ChEBI" id="CHEBI:60240"/>
    </cofactor>
</comment>
<comment type="subcellular location">
    <subcellularLocation>
        <location evidence="1">Cytoplasm</location>
    </subcellularLocation>
</comment>
<comment type="similarity">
    <text evidence="1">Belongs to the Maf family. YhdE subfamily.</text>
</comment>
<evidence type="ECO:0000255" key="1">
    <source>
        <dbReference type="HAMAP-Rule" id="MF_00528"/>
    </source>
</evidence>
<dbReference type="EC" id="3.6.1.9" evidence="1"/>
<dbReference type="EMBL" id="CP000227">
    <property type="protein sequence ID" value="ACM14669.1"/>
    <property type="molecule type" value="Genomic_DNA"/>
</dbReference>
<dbReference type="SMR" id="B9IZ30"/>
<dbReference type="KEGG" id="bcq:BCQ_4242"/>
<dbReference type="HOGENOM" id="CLU_040416_0_0_9"/>
<dbReference type="Proteomes" id="UP000000441">
    <property type="component" value="Chromosome"/>
</dbReference>
<dbReference type="GO" id="GO:0005737">
    <property type="term" value="C:cytoplasm"/>
    <property type="evidence" value="ECO:0007669"/>
    <property type="project" value="UniProtKB-SubCell"/>
</dbReference>
<dbReference type="GO" id="GO:0036218">
    <property type="term" value="F:dTTP diphosphatase activity"/>
    <property type="evidence" value="ECO:0007669"/>
    <property type="project" value="RHEA"/>
</dbReference>
<dbReference type="GO" id="GO:0036221">
    <property type="term" value="F:UTP diphosphatase activity"/>
    <property type="evidence" value="ECO:0007669"/>
    <property type="project" value="RHEA"/>
</dbReference>
<dbReference type="GO" id="GO:0009117">
    <property type="term" value="P:nucleotide metabolic process"/>
    <property type="evidence" value="ECO:0007669"/>
    <property type="project" value="UniProtKB-KW"/>
</dbReference>
<dbReference type="CDD" id="cd00555">
    <property type="entry name" value="Maf"/>
    <property type="match status" value="1"/>
</dbReference>
<dbReference type="FunFam" id="3.90.950.10:FF:000007">
    <property type="entry name" value="dTTP/UTP pyrophosphatase"/>
    <property type="match status" value="1"/>
</dbReference>
<dbReference type="Gene3D" id="3.90.950.10">
    <property type="match status" value="1"/>
</dbReference>
<dbReference type="HAMAP" id="MF_00528">
    <property type="entry name" value="Maf"/>
    <property type="match status" value="1"/>
</dbReference>
<dbReference type="InterPro" id="IPR029001">
    <property type="entry name" value="ITPase-like_fam"/>
</dbReference>
<dbReference type="InterPro" id="IPR003697">
    <property type="entry name" value="Maf-like"/>
</dbReference>
<dbReference type="NCBIfam" id="TIGR00172">
    <property type="entry name" value="maf"/>
    <property type="match status" value="1"/>
</dbReference>
<dbReference type="PANTHER" id="PTHR43213">
    <property type="entry name" value="BIFUNCTIONAL DTTP/UTP PYROPHOSPHATASE/METHYLTRANSFERASE PROTEIN-RELATED"/>
    <property type="match status" value="1"/>
</dbReference>
<dbReference type="PANTHER" id="PTHR43213:SF5">
    <property type="entry name" value="BIFUNCTIONAL DTTP_UTP PYROPHOSPHATASE_METHYLTRANSFERASE PROTEIN-RELATED"/>
    <property type="match status" value="1"/>
</dbReference>
<dbReference type="Pfam" id="PF02545">
    <property type="entry name" value="Maf"/>
    <property type="match status" value="1"/>
</dbReference>
<dbReference type="PIRSF" id="PIRSF006305">
    <property type="entry name" value="Maf"/>
    <property type="match status" value="1"/>
</dbReference>
<dbReference type="SUPFAM" id="SSF52972">
    <property type="entry name" value="ITPase-like"/>
    <property type="match status" value="1"/>
</dbReference>